<gene>
    <name evidence="1" type="primary">infA</name>
    <name type="ordered locus">Pnap_0981</name>
</gene>
<evidence type="ECO:0000255" key="1">
    <source>
        <dbReference type="HAMAP-Rule" id="MF_00075"/>
    </source>
</evidence>
<dbReference type="EMBL" id="CP000529">
    <property type="protein sequence ID" value="ABM36298.1"/>
    <property type="molecule type" value="Genomic_DNA"/>
</dbReference>
<dbReference type="RefSeq" id="WP_011800392.1">
    <property type="nucleotide sequence ID" value="NC_008781.1"/>
</dbReference>
<dbReference type="SMR" id="A1VKX0"/>
<dbReference type="STRING" id="365044.Pnap_0981"/>
<dbReference type="KEGG" id="pna:Pnap_0981"/>
<dbReference type="eggNOG" id="COG0361">
    <property type="taxonomic scope" value="Bacteria"/>
</dbReference>
<dbReference type="HOGENOM" id="CLU_151267_4_1_4"/>
<dbReference type="OrthoDB" id="9803250at2"/>
<dbReference type="Proteomes" id="UP000000644">
    <property type="component" value="Chromosome"/>
</dbReference>
<dbReference type="GO" id="GO:0005829">
    <property type="term" value="C:cytosol"/>
    <property type="evidence" value="ECO:0007669"/>
    <property type="project" value="TreeGrafter"/>
</dbReference>
<dbReference type="GO" id="GO:0043022">
    <property type="term" value="F:ribosome binding"/>
    <property type="evidence" value="ECO:0007669"/>
    <property type="project" value="UniProtKB-UniRule"/>
</dbReference>
<dbReference type="GO" id="GO:0019843">
    <property type="term" value="F:rRNA binding"/>
    <property type="evidence" value="ECO:0007669"/>
    <property type="project" value="UniProtKB-UniRule"/>
</dbReference>
<dbReference type="GO" id="GO:0003743">
    <property type="term" value="F:translation initiation factor activity"/>
    <property type="evidence" value="ECO:0007669"/>
    <property type="project" value="UniProtKB-UniRule"/>
</dbReference>
<dbReference type="CDD" id="cd04451">
    <property type="entry name" value="S1_IF1"/>
    <property type="match status" value="1"/>
</dbReference>
<dbReference type="FunFam" id="2.40.50.140:FF:000002">
    <property type="entry name" value="Translation initiation factor IF-1"/>
    <property type="match status" value="1"/>
</dbReference>
<dbReference type="Gene3D" id="2.40.50.140">
    <property type="entry name" value="Nucleic acid-binding proteins"/>
    <property type="match status" value="1"/>
</dbReference>
<dbReference type="HAMAP" id="MF_00075">
    <property type="entry name" value="IF_1"/>
    <property type="match status" value="1"/>
</dbReference>
<dbReference type="InterPro" id="IPR012340">
    <property type="entry name" value="NA-bd_OB-fold"/>
</dbReference>
<dbReference type="InterPro" id="IPR006196">
    <property type="entry name" value="RNA-binding_domain_S1_IF1"/>
</dbReference>
<dbReference type="InterPro" id="IPR004368">
    <property type="entry name" value="TIF_IF1"/>
</dbReference>
<dbReference type="NCBIfam" id="TIGR00008">
    <property type="entry name" value="infA"/>
    <property type="match status" value="1"/>
</dbReference>
<dbReference type="PANTHER" id="PTHR33370">
    <property type="entry name" value="TRANSLATION INITIATION FACTOR IF-1, CHLOROPLASTIC"/>
    <property type="match status" value="1"/>
</dbReference>
<dbReference type="PANTHER" id="PTHR33370:SF1">
    <property type="entry name" value="TRANSLATION INITIATION FACTOR IF-1, CHLOROPLASTIC"/>
    <property type="match status" value="1"/>
</dbReference>
<dbReference type="Pfam" id="PF01176">
    <property type="entry name" value="eIF-1a"/>
    <property type="match status" value="1"/>
</dbReference>
<dbReference type="SUPFAM" id="SSF50249">
    <property type="entry name" value="Nucleic acid-binding proteins"/>
    <property type="match status" value="1"/>
</dbReference>
<dbReference type="PROSITE" id="PS50832">
    <property type="entry name" value="S1_IF1_TYPE"/>
    <property type="match status" value="1"/>
</dbReference>
<protein>
    <recommendedName>
        <fullName evidence="1">Translation initiation factor IF-1</fullName>
    </recommendedName>
</protein>
<accession>A1VKX0</accession>
<keyword id="KW-0963">Cytoplasm</keyword>
<keyword id="KW-0396">Initiation factor</keyword>
<keyword id="KW-0648">Protein biosynthesis</keyword>
<keyword id="KW-1185">Reference proteome</keyword>
<keyword id="KW-0694">RNA-binding</keyword>
<keyword id="KW-0699">rRNA-binding</keyword>
<sequence>MAKEELIEMHGLVDEVLPDSRFRVTLDNGHKLVAYTSGKMRKNHIRILAGDQVSLELSPYDLSKGRITFRHIAGRGPGPAPRQSR</sequence>
<comment type="function">
    <text evidence="1">One of the essential components for the initiation of protein synthesis. Stabilizes the binding of IF-2 and IF-3 on the 30S subunit to which N-formylmethionyl-tRNA(fMet) subsequently binds. Helps modulate mRNA selection, yielding the 30S pre-initiation complex (PIC). Upon addition of the 50S ribosomal subunit IF-1, IF-2 and IF-3 are released leaving the mature 70S translation initiation complex.</text>
</comment>
<comment type="subunit">
    <text evidence="1">Component of the 30S ribosomal translation pre-initiation complex which assembles on the 30S ribosome in the order IF-2 and IF-3, IF-1 and N-formylmethionyl-tRNA(fMet); mRNA recruitment can occur at any time during PIC assembly.</text>
</comment>
<comment type="subcellular location">
    <subcellularLocation>
        <location evidence="1">Cytoplasm</location>
    </subcellularLocation>
</comment>
<comment type="similarity">
    <text evidence="1">Belongs to the IF-1 family.</text>
</comment>
<organism>
    <name type="scientific">Polaromonas naphthalenivorans (strain CJ2)</name>
    <dbReference type="NCBI Taxonomy" id="365044"/>
    <lineage>
        <taxon>Bacteria</taxon>
        <taxon>Pseudomonadati</taxon>
        <taxon>Pseudomonadota</taxon>
        <taxon>Betaproteobacteria</taxon>
        <taxon>Burkholderiales</taxon>
        <taxon>Comamonadaceae</taxon>
        <taxon>Polaromonas</taxon>
    </lineage>
</organism>
<name>IF1_POLNA</name>
<feature type="chain" id="PRO_0000338883" description="Translation initiation factor IF-1">
    <location>
        <begin position="1"/>
        <end position="85"/>
    </location>
</feature>
<feature type="domain" description="S1-like" evidence="1">
    <location>
        <begin position="1"/>
        <end position="72"/>
    </location>
</feature>
<proteinExistence type="inferred from homology"/>
<reference key="1">
    <citation type="journal article" date="2009" name="Environ. Microbiol.">
        <title>The genome of Polaromonas naphthalenivorans strain CJ2, isolated from coal tar-contaminated sediment, reveals physiological and metabolic versatility and evolution through extensive horizontal gene transfer.</title>
        <authorList>
            <person name="Yagi J.M."/>
            <person name="Sims D."/>
            <person name="Brettin T."/>
            <person name="Bruce D."/>
            <person name="Madsen E.L."/>
        </authorList>
    </citation>
    <scope>NUCLEOTIDE SEQUENCE [LARGE SCALE GENOMIC DNA]</scope>
    <source>
        <strain>CJ2</strain>
    </source>
</reference>